<organism>
    <name type="scientific">Saccharophagus degradans (strain 2-40 / ATCC 43961 / DSM 17024)</name>
    <dbReference type="NCBI Taxonomy" id="203122"/>
    <lineage>
        <taxon>Bacteria</taxon>
        <taxon>Pseudomonadati</taxon>
        <taxon>Pseudomonadota</taxon>
        <taxon>Gammaproteobacteria</taxon>
        <taxon>Cellvibrionales</taxon>
        <taxon>Cellvibrionaceae</taxon>
        <taxon>Saccharophagus</taxon>
    </lineage>
</organism>
<comment type="function">
    <text evidence="1">Catalyzes the methylthiolation of an aspartic acid residue of ribosomal protein uS12.</text>
</comment>
<comment type="catalytic activity">
    <reaction evidence="1">
        <text>L-aspartate(89)-[ribosomal protein uS12]-hydrogen + (sulfur carrier)-SH + AH2 + 2 S-adenosyl-L-methionine = 3-methylsulfanyl-L-aspartate(89)-[ribosomal protein uS12]-hydrogen + (sulfur carrier)-H + 5'-deoxyadenosine + L-methionine + A + S-adenosyl-L-homocysteine + 2 H(+)</text>
        <dbReference type="Rhea" id="RHEA:37087"/>
        <dbReference type="Rhea" id="RHEA-COMP:10460"/>
        <dbReference type="Rhea" id="RHEA-COMP:10461"/>
        <dbReference type="Rhea" id="RHEA-COMP:14737"/>
        <dbReference type="Rhea" id="RHEA-COMP:14739"/>
        <dbReference type="ChEBI" id="CHEBI:13193"/>
        <dbReference type="ChEBI" id="CHEBI:15378"/>
        <dbReference type="ChEBI" id="CHEBI:17319"/>
        <dbReference type="ChEBI" id="CHEBI:17499"/>
        <dbReference type="ChEBI" id="CHEBI:29917"/>
        <dbReference type="ChEBI" id="CHEBI:29961"/>
        <dbReference type="ChEBI" id="CHEBI:57844"/>
        <dbReference type="ChEBI" id="CHEBI:57856"/>
        <dbReference type="ChEBI" id="CHEBI:59789"/>
        <dbReference type="ChEBI" id="CHEBI:64428"/>
        <dbReference type="ChEBI" id="CHEBI:73599"/>
        <dbReference type="EC" id="2.8.4.4"/>
    </reaction>
</comment>
<comment type="cofactor">
    <cofactor evidence="1">
        <name>[4Fe-4S] cluster</name>
        <dbReference type="ChEBI" id="CHEBI:49883"/>
    </cofactor>
    <text evidence="1">Binds 2 [4Fe-4S] clusters. One cluster is coordinated with 3 cysteines and an exchangeable S-adenosyl-L-methionine.</text>
</comment>
<comment type="subcellular location">
    <subcellularLocation>
        <location evidence="1">Cytoplasm</location>
    </subcellularLocation>
</comment>
<comment type="similarity">
    <text evidence="1">Belongs to the methylthiotransferase family. RimO subfamily.</text>
</comment>
<dbReference type="EC" id="2.8.4.4" evidence="1"/>
<dbReference type="EMBL" id="CP000282">
    <property type="protein sequence ID" value="ABD82586.1"/>
    <property type="molecule type" value="Genomic_DNA"/>
</dbReference>
<dbReference type="RefSeq" id="WP_011469802.1">
    <property type="nucleotide sequence ID" value="NC_007912.1"/>
</dbReference>
<dbReference type="SMR" id="Q21FE3"/>
<dbReference type="STRING" id="203122.Sde_3331"/>
<dbReference type="GeneID" id="98614951"/>
<dbReference type="KEGG" id="sde:Sde_3331"/>
<dbReference type="eggNOG" id="COG0621">
    <property type="taxonomic scope" value="Bacteria"/>
</dbReference>
<dbReference type="HOGENOM" id="CLU_018697_0_0_6"/>
<dbReference type="OrthoDB" id="9805215at2"/>
<dbReference type="Proteomes" id="UP000001947">
    <property type="component" value="Chromosome"/>
</dbReference>
<dbReference type="GO" id="GO:0005829">
    <property type="term" value="C:cytosol"/>
    <property type="evidence" value="ECO:0007669"/>
    <property type="project" value="TreeGrafter"/>
</dbReference>
<dbReference type="GO" id="GO:0051539">
    <property type="term" value="F:4 iron, 4 sulfur cluster binding"/>
    <property type="evidence" value="ECO:0007669"/>
    <property type="project" value="UniProtKB-UniRule"/>
</dbReference>
<dbReference type="GO" id="GO:0035599">
    <property type="term" value="F:aspartic acid methylthiotransferase activity"/>
    <property type="evidence" value="ECO:0007669"/>
    <property type="project" value="TreeGrafter"/>
</dbReference>
<dbReference type="GO" id="GO:0046872">
    <property type="term" value="F:metal ion binding"/>
    <property type="evidence" value="ECO:0007669"/>
    <property type="project" value="UniProtKB-KW"/>
</dbReference>
<dbReference type="GO" id="GO:0103039">
    <property type="term" value="F:protein methylthiotransferase activity"/>
    <property type="evidence" value="ECO:0007669"/>
    <property type="project" value="UniProtKB-EC"/>
</dbReference>
<dbReference type="GO" id="GO:0006400">
    <property type="term" value="P:tRNA modification"/>
    <property type="evidence" value="ECO:0007669"/>
    <property type="project" value="InterPro"/>
</dbReference>
<dbReference type="FunFam" id="2.40.50.140:FF:000210">
    <property type="entry name" value="Ribosomal protein S12 methylthiotransferase RimO"/>
    <property type="match status" value="1"/>
</dbReference>
<dbReference type="FunFam" id="3.40.50.12160:FF:000002">
    <property type="entry name" value="Ribosomal protein S12 methylthiotransferase RimO"/>
    <property type="match status" value="1"/>
</dbReference>
<dbReference type="FunFam" id="3.80.30.20:FF:000001">
    <property type="entry name" value="tRNA-2-methylthio-N(6)-dimethylallyladenosine synthase 2"/>
    <property type="match status" value="1"/>
</dbReference>
<dbReference type="Gene3D" id="3.40.50.12160">
    <property type="entry name" value="Methylthiotransferase, N-terminal domain"/>
    <property type="match status" value="1"/>
</dbReference>
<dbReference type="Gene3D" id="2.40.50.140">
    <property type="entry name" value="Nucleic acid-binding proteins"/>
    <property type="match status" value="1"/>
</dbReference>
<dbReference type="Gene3D" id="3.80.30.20">
    <property type="entry name" value="tm_1862 like domain"/>
    <property type="match status" value="1"/>
</dbReference>
<dbReference type="HAMAP" id="MF_01865">
    <property type="entry name" value="MTTase_RimO"/>
    <property type="match status" value="1"/>
</dbReference>
<dbReference type="InterPro" id="IPR006638">
    <property type="entry name" value="Elp3/MiaA/NifB-like_rSAM"/>
</dbReference>
<dbReference type="InterPro" id="IPR005839">
    <property type="entry name" value="Methylthiotransferase"/>
</dbReference>
<dbReference type="InterPro" id="IPR020612">
    <property type="entry name" value="Methylthiotransferase_CS"/>
</dbReference>
<dbReference type="InterPro" id="IPR013848">
    <property type="entry name" value="Methylthiotransferase_N"/>
</dbReference>
<dbReference type="InterPro" id="IPR038135">
    <property type="entry name" value="Methylthiotransferase_N_sf"/>
</dbReference>
<dbReference type="InterPro" id="IPR012340">
    <property type="entry name" value="NA-bd_OB-fold"/>
</dbReference>
<dbReference type="InterPro" id="IPR005840">
    <property type="entry name" value="Ribosomal_uS12_MeSTrfase_RimO"/>
</dbReference>
<dbReference type="InterPro" id="IPR007197">
    <property type="entry name" value="rSAM"/>
</dbReference>
<dbReference type="InterPro" id="IPR023404">
    <property type="entry name" value="rSAM_horseshoe"/>
</dbReference>
<dbReference type="InterPro" id="IPR002792">
    <property type="entry name" value="TRAM_dom"/>
</dbReference>
<dbReference type="NCBIfam" id="TIGR01125">
    <property type="entry name" value="30S ribosomal protein S12 methylthiotransferase RimO"/>
    <property type="match status" value="1"/>
</dbReference>
<dbReference type="NCBIfam" id="TIGR00089">
    <property type="entry name" value="MiaB/RimO family radical SAM methylthiotransferase"/>
    <property type="match status" value="1"/>
</dbReference>
<dbReference type="PANTHER" id="PTHR43837">
    <property type="entry name" value="RIBOSOMAL PROTEIN S12 METHYLTHIOTRANSFERASE RIMO"/>
    <property type="match status" value="1"/>
</dbReference>
<dbReference type="PANTHER" id="PTHR43837:SF1">
    <property type="entry name" value="RIBOSOMAL PROTEIN US12 METHYLTHIOTRANSFERASE RIMO"/>
    <property type="match status" value="1"/>
</dbReference>
<dbReference type="Pfam" id="PF04055">
    <property type="entry name" value="Radical_SAM"/>
    <property type="match status" value="1"/>
</dbReference>
<dbReference type="Pfam" id="PF18693">
    <property type="entry name" value="TRAM_2"/>
    <property type="match status" value="1"/>
</dbReference>
<dbReference type="Pfam" id="PF00919">
    <property type="entry name" value="UPF0004"/>
    <property type="match status" value="1"/>
</dbReference>
<dbReference type="SFLD" id="SFLDG01082">
    <property type="entry name" value="B12-binding_domain_containing"/>
    <property type="match status" value="1"/>
</dbReference>
<dbReference type="SFLD" id="SFLDS00029">
    <property type="entry name" value="Radical_SAM"/>
    <property type="match status" value="1"/>
</dbReference>
<dbReference type="SFLD" id="SFLDF00274">
    <property type="entry name" value="ribosomal_protein_S12_methylth"/>
    <property type="match status" value="1"/>
</dbReference>
<dbReference type="SMART" id="SM00729">
    <property type="entry name" value="Elp3"/>
    <property type="match status" value="1"/>
</dbReference>
<dbReference type="SUPFAM" id="SSF102114">
    <property type="entry name" value="Radical SAM enzymes"/>
    <property type="match status" value="1"/>
</dbReference>
<dbReference type="PROSITE" id="PS51449">
    <property type="entry name" value="MTTASE_N"/>
    <property type="match status" value="1"/>
</dbReference>
<dbReference type="PROSITE" id="PS01278">
    <property type="entry name" value="MTTASE_RADICAL"/>
    <property type="match status" value="1"/>
</dbReference>
<dbReference type="PROSITE" id="PS51918">
    <property type="entry name" value="RADICAL_SAM"/>
    <property type="match status" value="1"/>
</dbReference>
<dbReference type="PROSITE" id="PS50926">
    <property type="entry name" value="TRAM"/>
    <property type="match status" value="1"/>
</dbReference>
<sequence length="479" mass="52564">MTVNTFDPSKASPVTHASDSASKTPEPNAVAAPSSELGNRVGFVSLGCPKALVDSERILTQLKLDGYDVVPSYNDADVVVVNTCGFIDSAKQESLDAIGEAMKENGKVIVTGCMGKGNDAQVIKETYPNVLSVTGPAAYEEVMGAVHGYIPPKKEHNPLIDLVPPQGVKLTPRHYAYLKISEGCNHRCTFCIIPDMRGDLVSRPIGDVLGEAERLVAAGTKEILVISQDTSAYGVDVKYRTGFWQGRPVKTRMLEMCEALGELGAWVRLHYVYPYPHVDNVIPLMAEGKILPYLDIPFQHASPQVLKNMRRPAHQEKTLERLAKWREMCPELVLRSTFVVGFPGETEQDFQILLDWLQEAQLDRVGCFEYSPVEGAKANALPNHVPDEVKRERWERFMETQQAISAAKLKQKVGYEMDVIIDSIDGDIATGRTYADAPEIDGVVTFSGAAGMKVGEFSAVEITGSDDYDLTGIAVEDEQ</sequence>
<accession>Q21FE3</accession>
<proteinExistence type="inferred from homology"/>
<reference key="1">
    <citation type="journal article" date="2008" name="PLoS Genet.">
        <title>Complete genome sequence of the complex carbohydrate-degrading marine bacterium, Saccharophagus degradans strain 2-40 T.</title>
        <authorList>
            <person name="Weiner R.M."/>
            <person name="Taylor L.E. II"/>
            <person name="Henrissat B."/>
            <person name="Hauser L."/>
            <person name="Land M."/>
            <person name="Coutinho P.M."/>
            <person name="Rancurel C."/>
            <person name="Saunders E.H."/>
            <person name="Longmire A.G."/>
            <person name="Zhang H."/>
            <person name="Bayer E.A."/>
            <person name="Gilbert H.J."/>
            <person name="Larimer F."/>
            <person name="Zhulin I.B."/>
            <person name="Ekborg N.A."/>
            <person name="Lamed R."/>
            <person name="Richardson P.M."/>
            <person name="Borovok I."/>
            <person name="Hutcheson S."/>
        </authorList>
    </citation>
    <scope>NUCLEOTIDE SEQUENCE [LARGE SCALE GENOMIC DNA]</scope>
    <source>
        <strain>2-40 / ATCC 43961 / DSM 17024</strain>
    </source>
</reference>
<evidence type="ECO:0000255" key="1">
    <source>
        <dbReference type="HAMAP-Rule" id="MF_01865"/>
    </source>
</evidence>
<evidence type="ECO:0000255" key="2">
    <source>
        <dbReference type="PROSITE-ProRule" id="PRU01266"/>
    </source>
</evidence>
<evidence type="ECO:0000256" key="3">
    <source>
        <dbReference type="SAM" id="MobiDB-lite"/>
    </source>
</evidence>
<feature type="chain" id="PRO_0000374981" description="Ribosomal protein uS12 methylthiotransferase RimO">
    <location>
        <begin position="1"/>
        <end position="479"/>
    </location>
</feature>
<feature type="domain" description="MTTase N-terminal" evidence="1">
    <location>
        <begin position="39"/>
        <end position="151"/>
    </location>
</feature>
<feature type="domain" description="Radical SAM core" evidence="2">
    <location>
        <begin position="170"/>
        <end position="407"/>
    </location>
</feature>
<feature type="domain" description="TRAM" evidence="1">
    <location>
        <begin position="410"/>
        <end position="476"/>
    </location>
</feature>
<feature type="region of interest" description="Disordered" evidence="3">
    <location>
        <begin position="1"/>
        <end position="34"/>
    </location>
</feature>
<feature type="compositionally biased region" description="Polar residues" evidence="3">
    <location>
        <begin position="15"/>
        <end position="25"/>
    </location>
</feature>
<feature type="binding site" evidence="1">
    <location>
        <position position="48"/>
    </location>
    <ligand>
        <name>[4Fe-4S] cluster</name>
        <dbReference type="ChEBI" id="CHEBI:49883"/>
        <label>1</label>
    </ligand>
</feature>
<feature type="binding site" evidence="1">
    <location>
        <position position="84"/>
    </location>
    <ligand>
        <name>[4Fe-4S] cluster</name>
        <dbReference type="ChEBI" id="CHEBI:49883"/>
        <label>1</label>
    </ligand>
</feature>
<feature type="binding site" evidence="1">
    <location>
        <position position="113"/>
    </location>
    <ligand>
        <name>[4Fe-4S] cluster</name>
        <dbReference type="ChEBI" id="CHEBI:49883"/>
        <label>1</label>
    </ligand>
</feature>
<feature type="binding site" evidence="1">
    <location>
        <position position="184"/>
    </location>
    <ligand>
        <name>[4Fe-4S] cluster</name>
        <dbReference type="ChEBI" id="CHEBI:49883"/>
        <label>2</label>
        <note>4Fe-4S-S-AdoMet</note>
    </ligand>
</feature>
<feature type="binding site" evidence="1">
    <location>
        <position position="188"/>
    </location>
    <ligand>
        <name>[4Fe-4S] cluster</name>
        <dbReference type="ChEBI" id="CHEBI:49883"/>
        <label>2</label>
        <note>4Fe-4S-S-AdoMet</note>
    </ligand>
</feature>
<feature type="binding site" evidence="1">
    <location>
        <position position="191"/>
    </location>
    <ligand>
        <name>[4Fe-4S] cluster</name>
        <dbReference type="ChEBI" id="CHEBI:49883"/>
        <label>2</label>
        <note>4Fe-4S-S-AdoMet</note>
    </ligand>
</feature>
<keyword id="KW-0004">4Fe-4S</keyword>
<keyword id="KW-0963">Cytoplasm</keyword>
<keyword id="KW-0408">Iron</keyword>
<keyword id="KW-0411">Iron-sulfur</keyword>
<keyword id="KW-0479">Metal-binding</keyword>
<keyword id="KW-1185">Reference proteome</keyword>
<keyword id="KW-0949">S-adenosyl-L-methionine</keyword>
<keyword id="KW-0808">Transferase</keyword>
<protein>
    <recommendedName>
        <fullName evidence="1">Ribosomal protein uS12 methylthiotransferase RimO</fullName>
        <shortName evidence="1">uS12 MTTase</shortName>
        <shortName evidence="1">uS12 methylthiotransferase</shortName>
        <ecNumber evidence="1">2.8.4.4</ecNumber>
    </recommendedName>
    <alternativeName>
        <fullName evidence="1">Ribosomal protein uS12 (aspartate-C(3))-methylthiotransferase</fullName>
    </alternativeName>
    <alternativeName>
        <fullName evidence="1">Ribosome maturation factor RimO</fullName>
    </alternativeName>
</protein>
<name>RIMO_SACD2</name>
<gene>
    <name evidence="1" type="primary">rimO</name>
    <name type="ordered locus">Sde_3331</name>
</gene>